<gene>
    <name evidence="13" type="primary">ABHD5</name>
    <name type="synonym">NCIE2</name>
    <name type="ORF">CGI-58</name>
</gene>
<dbReference type="EC" id="2.3.1.51" evidence="9"/>
<dbReference type="EMBL" id="AL606838">
    <property type="protein sequence ID" value="CAD12731.1"/>
    <property type="molecule type" value="Genomic_DNA"/>
</dbReference>
<dbReference type="EMBL" id="AF151816">
    <property type="protein sequence ID" value="AAD34053.1"/>
    <property type="molecule type" value="mRNA"/>
</dbReference>
<dbReference type="EMBL" id="AK313811">
    <property type="protein sequence ID" value="BAG36547.1"/>
    <property type="molecule type" value="mRNA"/>
</dbReference>
<dbReference type="EMBL" id="AC105903">
    <property type="status" value="NOT_ANNOTATED_CDS"/>
    <property type="molecule type" value="Genomic_DNA"/>
</dbReference>
<dbReference type="EMBL" id="CH471055">
    <property type="protein sequence ID" value="EAW64699.1"/>
    <property type="molecule type" value="Genomic_DNA"/>
</dbReference>
<dbReference type="EMBL" id="BC021958">
    <property type="protein sequence ID" value="AAH21958.1"/>
    <property type="molecule type" value="mRNA"/>
</dbReference>
<dbReference type="CCDS" id="CCDS2711.1"/>
<dbReference type="RefSeq" id="NP_001342115.1">
    <property type="nucleotide sequence ID" value="NM_001355186.2"/>
</dbReference>
<dbReference type="RefSeq" id="NP_057090.2">
    <property type="nucleotide sequence ID" value="NM_016006.4"/>
</dbReference>
<dbReference type="RefSeq" id="XP_047304199.1">
    <property type="nucleotide sequence ID" value="XM_047448243.1"/>
</dbReference>
<dbReference type="RefSeq" id="XP_054202694.1">
    <property type="nucleotide sequence ID" value="XM_054346719.1"/>
</dbReference>
<dbReference type="SMR" id="Q8WTS1"/>
<dbReference type="BioGRID" id="119288">
    <property type="interactions" value="38"/>
</dbReference>
<dbReference type="FunCoup" id="Q8WTS1">
    <property type="interactions" value="2382"/>
</dbReference>
<dbReference type="IntAct" id="Q8WTS1">
    <property type="interactions" value="36"/>
</dbReference>
<dbReference type="MINT" id="Q8WTS1"/>
<dbReference type="STRING" id="9606.ENSP00000495778"/>
<dbReference type="SwissLipids" id="SLP:000000098"/>
<dbReference type="ESTHER" id="human-ABHD5">
    <property type="family name" value="CGI-58_ABHD5_ABHD4"/>
</dbReference>
<dbReference type="MEROPS" id="S33.975"/>
<dbReference type="GlyGen" id="Q8WTS1">
    <property type="glycosylation" value="1 site, 1 O-linked glycan (1 site)"/>
</dbReference>
<dbReference type="iPTMnet" id="Q8WTS1"/>
<dbReference type="PhosphoSitePlus" id="Q8WTS1"/>
<dbReference type="SwissPalm" id="Q8WTS1"/>
<dbReference type="BioMuta" id="ABHD5"/>
<dbReference type="DMDM" id="73921640"/>
<dbReference type="jPOST" id="Q8WTS1"/>
<dbReference type="MassIVE" id="Q8WTS1"/>
<dbReference type="PaxDb" id="9606-ENSP00000390849"/>
<dbReference type="PeptideAtlas" id="Q8WTS1"/>
<dbReference type="ProteomicsDB" id="74594"/>
<dbReference type="Pumba" id="Q8WTS1"/>
<dbReference type="Antibodypedia" id="29395">
    <property type="antibodies" value="338 antibodies from 32 providers"/>
</dbReference>
<dbReference type="DNASU" id="51099"/>
<dbReference type="Ensembl" id="ENST00000644371.2">
    <property type="protein sequence ID" value="ENSP00000495778.1"/>
    <property type="gene ID" value="ENSG00000011198.10"/>
</dbReference>
<dbReference type="Ensembl" id="ENST00000649763.1">
    <property type="protein sequence ID" value="ENSP00000497701.1"/>
    <property type="gene ID" value="ENSG00000011198.10"/>
</dbReference>
<dbReference type="GeneID" id="51099"/>
<dbReference type="KEGG" id="hsa:51099"/>
<dbReference type="MANE-Select" id="ENST00000644371.2">
    <property type="protein sequence ID" value="ENSP00000495778.1"/>
    <property type="RefSeq nucleotide sequence ID" value="NM_016006.6"/>
    <property type="RefSeq protein sequence ID" value="NP_057090.2"/>
</dbReference>
<dbReference type="UCSC" id="uc003cmx.4">
    <property type="organism name" value="human"/>
</dbReference>
<dbReference type="AGR" id="HGNC:21396"/>
<dbReference type="CTD" id="51099"/>
<dbReference type="DisGeNET" id="51099"/>
<dbReference type="GeneCards" id="ABHD5"/>
<dbReference type="HGNC" id="HGNC:21396">
    <property type="gene designation" value="ABHD5"/>
</dbReference>
<dbReference type="HPA" id="ENSG00000011198">
    <property type="expression patterns" value="Low tissue specificity"/>
</dbReference>
<dbReference type="MalaCards" id="ABHD5"/>
<dbReference type="MIM" id="275630">
    <property type="type" value="phenotype"/>
</dbReference>
<dbReference type="MIM" id="604780">
    <property type="type" value="gene"/>
</dbReference>
<dbReference type="neXtProt" id="NX_Q8WTS1"/>
<dbReference type="OpenTargets" id="ENSG00000011198"/>
<dbReference type="Orphanet" id="98907">
    <property type="disease" value="Neutral lipid storage disease with ichthyosis"/>
</dbReference>
<dbReference type="PharmGKB" id="PA134891622"/>
<dbReference type="VEuPathDB" id="HostDB:ENSG00000011198"/>
<dbReference type="eggNOG" id="KOG4409">
    <property type="taxonomic scope" value="Eukaryota"/>
</dbReference>
<dbReference type="GeneTree" id="ENSGT00390000016277"/>
<dbReference type="HOGENOM" id="CLU_017361_0_0_1"/>
<dbReference type="InParanoid" id="Q8WTS1"/>
<dbReference type="OMA" id="DTTIRWC"/>
<dbReference type="OrthoDB" id="7457040at2759"/>
<dbReference type="PAN-GO" id="Q8WTS1">
    <property type="GO annotations" value="8 GO annotations based on evolutionary models"/>
</dbReference>
<dbReference type="PhylomeDB" id="Q8WTS1"/>
<dbReference type="TreeFam" id="TF314196"/>
<dbReference type="PathwayCommons" id="Q8WTS1"/>
<dbReference type="Reactome" id="R-HSA-163560">
    <property type="pathway name" value="Triglyceride catabolism"/>
</dbReference>
<dbReference type="SignaLink" id="Q8WTS1"/>
<dbReference type="BioGRID-ORCS" id="51099">
    <property type="hits" value="9 hits in 1152 CRISPR screens"/>
</dbReference>
<dbReference type="ChiTaRS" id="ABHD5">
    <property type="organism name" value="human"/>
</dbReference>
<dbReference type="GeneWiki" id="ABHD5"/>
<dbReference type="GenomeRNAi" id="51099"/>
<dbReference type="Pharos" id="Q8WTS1">
    <property type="development level" value="Tbio"/>
</dbReference>
<dbReference type="PRO" id="PR:Q8WTS1"/>
<dbReference type="Proteomes" id="UP000005640">
    <property type="component" value="Chromosome 3"/>
</dbReference>
<dbReference type="RNAct" id="Q8WTS1">
    <property type="molecule type" value="protein"/>
</dbReference>
<dbReference type="Bgee" id="ENSG00000011198">
    <property type="expression patterns" value="Expressed in amniotic fluid and 196 other cell types or tissues"/>
</dbReference>
<dbReference type="ExpressionAtlas" id="Q8WTS1">
    <property type="expression patterns" value="baseline and differential"/>
</dbReference>
<dbReference type="GO" id="GO:0005829">
    <property type="term" value="C:cytosol"/>
    <property type="evidence" value="ECO:0000314"/>
    <property type="project" value="HPA"/>
</dbReference>
<dbReference type="GO" id="GO:0043231">
    <property type="term" value="C:intracellular membrane-bounded organelle"/>
    <property type="evidence" value="ECO:0000314"/>
    <property type="project" value="HPA"/>
</dbReference>
<dbReference type="GO" id="GO:0005811">
    <property type="term" value="C:lipid droplet"/>
    <property type="evidence" value="ECO:0000314"/>
    <property type="project" value="UniProtKB"/>
</dbReference>
<dbReference type="GO" id="GO:0005739">
    <property type="term" value="C:mitochondrion"/>
    <property type="evidence" value="ECO:0000318"/>
    <property type="project" value="GO_Central"/>
</dbReference>
<dbReference type="GO" id="GO:0005654">
    <property type="term" value="C:nucleoplasm"/>
    <property type="evidence" value="ECO:0000314"/>
    <property type="project" value="HPA"/>
</dbReference>
<dbReference type="GO" id="GO:0003841">
    <property type="term" value="F:1-acylglycerol-3-phosphate O-acyltransferase activity"/>
    <property type="evidence" value="ECO:0000314"/>
    <property type="project" value="UniProtKB"/>
</dbReference>
<dbReference type="GO" id="GO:0052689">
    <property type="term" value="F:carboxylic ester hydrolase activity"/>
    <property type="evidence" value="ECO:0000318"/>
    <property type="project" value="GO_Central"/>
</dbReference>
<dbReference type="GO" id="GO:0060229">
    <property type="term" value="F:lipase activator activity"/>
    <property type="evidence" value="ECO:0007669"/>
    <property type="project" value="Ensembl"/>
</dbReference>
<dbReference type="GO" id="GO:0042171">
    <property type="term" value="F:lysophosphatidic acid acyltransferase activity"/>
    <property type="evidence" value="ECO:0000314"/>
    <property type="project" value="UniProtKB"/>
</dbReference>
<dbReference type="GO" id="GO:0030154">
    <property type="term" value="P:cell differentiation"/>
    <property type="evidence" value="ECO:0007669"/>
    <property type="project" value="UniProtKB-KW"/>
</dbReference>
<dbReference type="GO" id="GO:0006631">
    <property type="term" value="P:fatty acid metabolic process"/>
    <property type="evidence" value="ECO:0007669"/>
    <property type="project" value="UniProtKB-KW"/>
</dbReference>
<dbReference type="GO" id="GO:0055088">
    <property type="term" value="P:lipid homeostasis"/>
    <property type="evidence" value="ECO:0000318"/>
    <property type="project" value="GO_Central"/>
</dbReference>
<dbReference type="GO" id="GO:0010891">
    <property type="term" value="P:negative regulation of triglyceride storage"/>
    <property type="evidence" value="ECO:0000314"/>
    <property type="project" value="UniProtKB"/>
</dbReference>
<dbReference type="GO" id="GO:0006654">
    <property type="term" value="P:phosphatidic acid biosynthetic process"/>
    <property type="evidence" value="ECO:0000314"/>
    <property type="project" value="UniProtKB"/>
</dbReference>
<dbReference type="GO" id="GO:0010898">
    <property type="term" value="P:positive regulation of triglyceride catabolic process"/>
    <property type="evidence" value="ECO:0000314"/>
    <property type="project" value="UniProtKB"/>
</dbReference>
<dbReference type="FunFam" id="3.40.50.1820:FF:000019">
    <property type="entry name" value="1-acylglycerol-3-phosphate O-acyltransferase ABHD5"/>
    <property type="match status" value="1"/>
</dbReference>
<dbReference type="Gene3D" id="3.40.50.1820">
    <property type="entry name" value="alpha/beta hydrolase"/>
    <property type="match status" value="1"/>
</dbReference>
<dbReference type="InterPro" id="IPR000073">
    <property type="entry name" value="AB_hydrolase_1"/>
</dbReference>
<dbReference type="InterPro" id="IPR029058">
    <property type="entry name" value="AB_hydrolase_fold"/>
</dbReference>
<dbReference type="PANTHER" id="PTHR42886:SF34">
    <property type="entry name" value="1-ACYLGLYCEROL-3-PHOSPHATE O-ACYLTRANSFERASE ABHD5"/>
    <property type="match status" value="1"/>
</dbReference>
<dbReference type="PANTHER" id="PTHR42886">
    <property type="entry name" value="RE40534P-RELATED"/>
    <property type="match status" value="1"/>
</dbReference>
<dbReference type="Pfam" id="PF00561">
    <property type="entry name" value="Abhydrolase_1"/>
    <property type="match status" value="1"/>
</dbReference>
<dbReference type="PRINTS" id="PR00111">
    <property type="entry name" value="ABHYDROLASE"/>
</dbReference>
<dbReference type="SUPFAM" id="SSF53474">
    <property type="entry name" value="alpha/beta-Hydrolases"/>
    <property type="match status" value="1"/>
</dbReference>
<protein>
    <recommendedName>
        <fullName evidence="11">1-acylglycerol-3-phosphate O-acyltransferase ABHD5</fullName>
        <ecNumber evidence="9">2.3.1.51</ecNumber>
    </recommendedName>
    <alternativeName>
        <fullName>Abhydrolase domain-containing protein 5</fullName>
    </alternativeName>
    <alternativeName>
        <fullName>Lipid droplet-binding protein CGI-58</fullName>
    </alternativeName>
</protein>
<keyword id="KW-0007">Acetylation</keyword>
<keyword id="KW-0012">Acyltransferase</keyword>
<keyword id="KW-0898">Cataract</keyword>
<keyword id="KW-0963">Cytoplasm</keyword>
<keyword id="KW-0209">Deafness</keyword>
<keyword id="KW-0221">Differentiation</keyword>
<keyword id="KW-0225">Disease variant</keyword>
<keyword id="KW-0276">Fatty acid metabolism</keyword>
<keyword id="KW-0977">Ichthyosis</keyword>
<keyword id="KW-0444">Lipid biosynthesis</keyword>
<keyword id="KW-0551">Lipid droplet</keyword>
<keyword id="KW-0443">Lipid metabolism</keyword>
<keyword id="KW-0594">Phospholipid biosynthesis</keyword>
<keyword id="KW-1208">Phospholipid metabolism</keyword>
<keyword id="KW-0597">Phosphoprotein</keyword>
<keyword id="KW-1267">Proteomics identification</keyword>
<keyword id="KW-1185">Reference proteome</keyword>
<keyword id="KW-0808">Transferase</keyword>
<feature type="initiator methionine" description="Removed" evidence="14">
    <location>
        <position position="1"/>
    </location>
</feature>
<feature type="chain" id="PRO_0000080866" description="1-acylglycerol-3-phosphate O-acyltransferase ABHD5">
    <location>
        <begin position="2"/>
        <end position="349"/>
    </location>
</feature>
<feature type="domain" description="AB hydrolase-1" evidence="4">
    <location>
        <begin position="77"/>
        <end position="184"/>
    </location>
</feature>
<feature type="short sequence motif" description="HXXXXD motif">
    <location>
        <begin position="327"/>
        <end position="332"/>
    </location>
</feature>
<feature type="modified residue" description="N-acetylalanine" evidence="14">
    <location>
        <position position="2"/>
    </location>
</feature>
<feature type="modified residue" description="Phosphoserine" evidence="2">
    <location>
        <position position="122"/>
    </location>
</feature>
<feature type="sequence variant" id="VAR_023387" description="In CDS; dbSNP:rs104893676." evidence="5">
    <original>E</original>
    <variation>K</variation>
    <location>
        <position position="7"/>
    </location>
</feature>
<feature type="sequence variant" id="VAR_037574" description="In dbSNP:rs2302349.">
    <original>I</original>
    <variation>T</variation>
    <location>
        <position position="72"/>
    </location>
</feature>
<feature type="sequence variant" id="VAR_057953" description="Found in a patient with CDS but without evidence it may cause the disease; dbSNP:rs145548259." evidence="6">
    <original>H</original>
    <variation>R</variation>
    <location>
        <position position="82"/>
    </location>
</feature>
<feature type="sequence variant" id="VAR_057954" description="In CDS." evidence="8">
    <original>S</original>
    <variation>G</variation>
    <location>
        <position position="115"/>
    </location>
</feature>
<feature type="sequence variant" id="VAR_023388" description="In CDS; loss of PNPLA2-dependent triacylclycerol hydrolysis but no effect on LPA acyltransferase activity; dbSNP:rs28939077." evidence="5 7 9">
    <original>Q</original>
    <variation>P</variation>
    <location>
        <position position="130"/>
    </location>
</feature>
<feature type="sequence variant" id="VAR_023389" description="In CDS; loss of PNPLA2-dependent triacylclycerol hydrolysis but no effect on LPA acyltransferase activity; dbSNP:rs28939078." evidence="5 7 9">
    <original>E</original>
    <variation>K</variation>
    <location>
        <position position="260"/>
    </location>
</feature>
<feature type="sequence conflict" description="In Ref. 2; AAD34053." evidence="11" ref="2">
    <original>F</original>
    <variation>S</variation>
    <location>
        <position position="263"/>
    </location>
</feature>
<reference key="1">
    <citation type="journal article" date="2001" name="Am. J. Hum. Genet.">
        <title>Mutations in CGI-58, the gene encoding a new protein of the esterase/lipase/thioesterase subfamily, in Chanarin-Dorfman syndrome.</title>
        <authorList>
            <person name="Lefevre C."/>
            <person name="Jobard F."/>
            <person name="Caux F."/>
            <person name="Bouadjar B."/>
            <person name="Karaduman A."/>
            <person name="Heilig R."/>
            <person name="Lakhdar H."/>
            <person name="Wollenberg A."/>
            <person name="Verret J.-L."/>
            <person name="Weissenbach J."/>
            <person name="Oezguec M."/>
            <person name="Lathrop M."/>
            <person name="Prud'homme J.-F."/>
            <person name="Fischer J."/>
        </authorList>
    </citation>
    <scope>NUCLEOTIDE SEQUENCE [GENOMIC DNA]</scope>
    <scope>TISSUE SPECIFICITY</scope>
    <scope>VARIANTS CDS LYS-7; PRO-130 AND LYS-260</scope>
</reference>
<reference key="2">
    <citation type="journal article" date="2000" name="Genome Res.">
        <title>Identification of novel human genes evolutionarily conserved in Caenorhabditis elegans by comparative proteomics.</title>
        <authorList>
            <person name="Lai C.-H."/>
            <person name="Chou C.-Y."/>
            <person name="Ch'ang L.-Y."/>
            <person name="Liu C.-S."/>
            <person name="Lin W.-C."/>
        </authorList>
    </citation>
    <scope>NUCLEOTIDE SEQUENCE [LARGE SCALE MRNA]</scope>
</reference>
<reference key="3">
    <citation type="journal article" date="2004" name="Nat. Genet.">
        <title>Complete sequencing and characterization of 21,243 full-length human cDNAs.</title>
        <authorList>
            <person name="Ota T."/>
            <person name="Suzuki Y."/>
            <person name="Nishikawa T."/>
            <person name="Otsuki T."/>
            <person name="Sugiyama T."/>
            <person name="Irie R."/>
            <person name="Wakamatsu A."/>
            <person name="Hayashi K."/>
            <person name="Sato H."/>
            <person name="Nagai K."/>
            <person name="Kimura K."/>
            <person name="Makita H."/>
            <person name="Sekine M."/>
            <person name="Obayashi M."/>
            <person name="Nishi T."/>
            <person name="Shibahara T."/>
            <person name="Tanaka T."/>
            <person name="Ishii S."/>
            <person name="Yamamoto J."/>
            <person name="Saito K."/>
            <person name="Kawai Y."/>
            <person name="Isono Y."/>
            <person name="Nakamura Y."/>
            <person name="Nagahari K."/>
            <person name="Murakami K."/>
            <person name="Yasuda T."/>
            <person name="Iwayanagi T."/>
            <person name="Wagatsuma M."/>
            <person name="Shiratori A."/>
            <person name="Sudo H."/>
            <person name="Hosoiri T."/>
            <person name="Kaku Y."/>
            <person name="Kodaira H."/>
            <person name="Kondo H."/>
            <person name="Sugawara M."/>
            <person name="Takahashi M."/>
            <person name="Kanda K."/>
            <person name="Yokoi T."/>
            <person name="Furuya T."/>
            <person name="Kikkawa E."/>
            <person name="Omura Y."/>
            <person name="Abe K."/>
            <person name="Kamihara K."/>
            <person name="Katsuta N."/>
            <person name="Sato K."/>
            <person name="Tanikawa M."/>
            <person name="Yamazaki M."/>
            <person name="Ninomiya K."/>
            <person name="Ishibashi T."/>
            <person name="Yamashita H."/>
            <person name="Murakawa K."/>
            <person name="Fujimori K."/>
            <person name="Tanai H."/>
            <person name="Kimata M."/>
            <person name="Watanabe M."/>
            <person name="Hiraoka S."/>
            <person name="Chiba Y."/>
            <person name="Ishida S."/>
            <person name="Ono Y."/>
            <person name="Takiguchi S."/>
            <person name="Watanabe S."/>
            <person name="Yosida M."/>
            <person name="Hotuta T."/>
            <person name="Kusano J."/>
            <person name="Kanehori K."/>
            <person name="Takahashi-Fujii A."/>
            <person name="Hara H."/>
            <person name="Tanase T.-O."/>
            <person name="Nomura Y."/>
            <person name="Togiya S."/>
            <person name="Komai F."/>
            <person name="Hara R."/>
            <person name="Takeuchi K."/>
            <person name="Arita M."/>
            <person name="Imose N."/>
            <person name="Musashino K."/>
            <person name="Yuuki H."/>
            <person name="Oshima A."/>
            <person name="Sasaki N."/>
            <person name="Aotsuka S."/>
            <person name="Yoshikawa Y."/>
            <person name="Matsunawa H."/>
            <person name="Ichihara T."/>
            <person name="Shiohata N."/>
            <person name="Sano S."/>
            <person name="Moriya S."/>
            <person name="Momiyama H."/>
            <person name="Satoh N."/>
            <person name="Takami S."/>
            <person name="Terashima Y."/>
            <person name="Suzuki O."/>
            <person name="Nakagawa S."/>
            <person name="Senoh A."/>
            <person name="Mizoguchi H."/>
            <person name="Goto Y."/>
            <person name="Shimizu F."/>
            <person name="Wakebe H."/>
            <person name="Hishigaki H."/>
            <person name="Watanabe T."/>
            <person name="Sugiyama A."/>
            <person name="Takemoto M."/>
            <person name="Kawakami B."/>
            <person name="Yamazaki M."/>
            <person name="Watanabe K."/>
            <person name="Kumagai A."/>
            <person name="Itakura S."/>
            <person name="Fukuzumi Y."/>
            <person name="Fujimori Y."/>
            <person name="Komiyama M."/>
            <person name="Tashiro H."/>
            <person name="Tanigami A."/>
            <person name="Fujiwara T."/>
            <person name="Ono T."/>
            <person name="Yamada K."/>
            <person name="Fujii Y."/>
            <person name="Ozaki K."/>
            <person name="Hirao M."/>
            <person name="Ohmori Y."/>
            <person name="Kawabata A."/>
            <person name="Hikiji T."/>
            <person name="Kobatake N."/>
            <person name="Inagaki H."/>
            <person name="Ikema Y."/>
            <person name="Okamoto S."/>
            <person name="Okitani R."/>
            <person name="Kawakami T."/>
            <person name="Noguchi S."/>
            <person name="Itoh T."/>
            <person name="Shigeta K."/>
            <person name="Senba T."/>
            <person name="Matsumura K."/>
            <person name="Nakajima Y."/>
            <person name="Mizuno T."/>
            <person name="Morinaga M."/>
            <person name="Sasaki M."/>
            <person name="Togashi T."/>
            <person name="Oyama M."/>
            <person name="Hata H."/>
            <person name="Watanabe M."/>
            <person name="Komatsu T."/>
            <person name="Mizushima-Sugano J."/>
            <person name="Satoh T."/>
            <person name="Shirai Y."/>
            <person name="Takahashi Y."/>
            <person name="Nakagawa K."/>
            <person name="Okumura K."/>
            <person name="Nagase T."/>
            <person name="Nomura N."/>
            <person name="Kikuchi H."/>
            <person name="Masuho Y."/>
            <person name="Yamashita R."/>
            <person name="Nakai K."/>
            <person name="Yada T."/>
            <person name="Nakamura Y."/>
            <person name="Ohara O."/>
            <person name="Isogai T."/>
            <person name="Sugano S."/>
        </authorList>
    </citation>
    <scope>NUCLEOTIDE SEQUENCE [LARGE SCALE MRNA]</scope>
    <source>
        <tissue>Substantia nigra</tissue>
    </source>
</reference>
<reference key="4">
    <citation type="journal article" date="2006" name="Nature">
        <title>The DNA sequence, annotation and analysis of human chromosome 3.</title>
        <authorList>
            <person name="Muzny D.M."/>
            <person name="Scherer S.E."/>
            <person name="Kaul R."/>
            <person name="Wang J."/>
            <person name="Yu J."/>
            <person name="Sudbrak R."/>
            <person name="Buhay C.J."/>
            <person name="Chen R."/>
            <person name="Cree A."/>
            <person name="Ding Y."/>
            <person name="Dugan-Rocha S."/>
            <person name="Gill R."/>
            <person name="Gunaratne P."/>
            <person name="Harris R.A."/>
            <person name="Hawes A.C."/>
            <person name="Hernandez J."/>
            <person name="Hodgson A.V."/>
            <person name="Hume J."/>
            <person name="Jackson A."/>
            <person name="Khan Z.M."/>
            <person name="Kovar-Smith C."/>
            <person name="Lewis L.R."/>
            <person name="Lozado R.J."/>
            <person name="Metzker M.L."/>
            <person name="Milosavljevic A."/>
            <person name="Miner G.R."/>
            <person name="Morgan M.B."/>
            <person name="Nazareth L.V."/>
            <person name="Scott G."/>
            <person name="Sodergren E."/>
            <person name="Song X.-Z."/>
            <person name="Steffen D."/>
            <person name="Wei S."/>
            <person name="Wheeler D.A."/>
            <person name="Wright M.W."/>
            <person name="Worley K.C."/>
            <person name="Yuan Y."/>
            <person name="Zhang Z."/>
            <person name="Adams C.Q."/>
            <person name="Ansari-Lari M.A."/>
            <person name="Ayele M."/>
            <person name="Brown M.J."/>
            <person name="Chen G."/>
            <person name="Chen Z."/>
            <person name="Clendenning J."/>
            <person name="Clerc-Blankenburg K.P."/>
            <person name="Chen R."/>
            <person name="Chen Z."/>
            <person name="Davis C."/>
            <person name="Delgado O."/>
            <person name="Dinh H.H."/>
            <person name="Dong W."/>
            <person name="Draper H."/>
            <person name="Ernst S."/>
            <person name="Fu G."/>
            <person name="Gonzalez-Garay M.L."/>
            <person name="Garcia D.K."/>
            <person name="Gillett W."/>
            <person name="Gu J."/>
            <person name="Hao B."/>
            <person name="Haugen E."/>
            <person name="Havlak P."/>
            <person name="He X."/>
            <person name="Hennig S."/>
            <person name="Hu S."/>
            <person name="Huang W."/>
            <person name="Jackson L.R."/>
            <person name="Jacob L.S."/>
            <person name="Kelly S.H."/>
            <person name="Kube M."/>
            <person name="Levy R."/>
            <person name="Li Z."/>
            <person name="Liu B."/>
            <person name="Liu J."/>
            <person name="Liu W."/>
            <person name="Lu J."/>
            <person name="Maheshwari M."/>
            <person name="Nguyen B.-V."/>
            <person name="Okwuonu G.O."/>
            <person name="Palmeiri A."/>
            <person name="Pasternak S."/>
            <person name="Perez L.M."/>
            <person name="Phelps K.A."/>
            <person name="Plopper F.J."/>
            <person name="Qiang B."/>
            <person name="Raymond C."/>
            <person name="Rodriguez R."/>
            <person name="Saenphimmachak C."/>
            <person name="Santibanez J."/>
            <person name="Shen H."/>
            <person name="Shen Y."/>
            <person name="Subramanian S."/>
            <person name="Tabor P.E."/>
            <person name="Verduzco D."/>
            <person name="Waldron L."/>
            <person name="Wang J."/>
            <person name="Wang J."/>
            <person name="Wang Q."/>
            <person name="Williams G.A."/>
            <person name="Wong G.K.-S."/>
            <person name="Yao Z."/>
            <person name="Zhang J."/>
            <person name="Zhang X."/>
            <person name="Zhao G."/>
            <person name="Zhou J."/>
            <person name="Zhou Y."/>
            <person name="Nelson D."/>
            <person name="Lehrach H."/>
            <person name="Reinhardt R."/>
            <person name="Naylor S.L."/>
            <person name="Yang H."/>
            <person name="Olson M."/>
            <person name="Weinstock G."/>
            <person name="Gibbs R.A."/>
        </authorList>
    </citation>
    <scope>NUCLEOTIDE SEQUENCE [LARGE SCALE GENOMIC DNA]</scope>
</reference>
<reference key="5">
    <citation type="submission" date="2005-07" db="EMBL/GenBank/DDBJ databases">
        <authorList>
            <person name="Mural R.J."/>
            <person name="Istrail S."/>
            <person name="Sutton G.G."/>
            <person name="Florea L."/>
            <person name="Halpern A.L."/>
            <person name="Mobarry C.M."/>
            <person name="Lippert R."/>
            <person name="Walenz B."/>
            <person name="Shatkay H."/>
            <person name="Dew I."/>
            <person name="Miller J.R."/>
            <person name="Flanigan M.J."/>
            <person name="Edwards N.J."/>
            <person name="Bolanos R."/>
            <person name="Fasulo D."/>
            <person name="Halldorsson B.V."/>
            <person name="Hannenhalli S."/>
            <person name="Turner R."/>
            <person name="Yooseph S."/>
            <person name="Lu F."/>
            <person name="Nusskern D.R."/>
            <person name="Shue B.C."/>
            <person name="Zheng X.H."/>
            <person name="Zhong F."/>
            <person name="Delcher A.L."/>
            <person name="Huson D.H."/>
            <person name="Kravitz S.A."/>
            <person name="Mouchard L."/>
            <person name="Reinert K."/>
            <person name="Remington K.A."/>
            <person name="Clark A.G."/>
            <person name="Waterman M.S."/>
            <person name="Eichler E.E."/>
            <person name="Adams M.D."/>
            <person name="Hunkapiller M.W."/>
            <person name="Myers E.W."/>
            <person name="Venter J.C."/>
        </authorList>
    </citation>
    <scope>NUCLEOTIDE SEQUENCE [LARGE SCALE GENOMIC DNA]</scope>
</reference>
<reference key="6">
    <citation type="journal article" date="2004" name="Genome Res.">
        <title>The status, quality, and expansion of the NIH full-length cDNA project: the Mammalian Gene Collection (MGC).</title>
        <authorList>
            <consortium name="The MGC Project Team"/>
        </authorList>
    </citation>
    <scope>NUCLEOTIDE SEQUENCE [LARGE SCALE MRNA]</scope>
    <source>
        <tissue>Skin</tissue>
    </source>
</reference>
<reference key="7">
    <citation type="journal article" date="2006" name="Cell Metab.">
        <title>Adipose triglyceride lipase-mediated lipolysis of cellular fat stores is activated by CGI-58 and defective in Chanarin-Dorfman Syndrome.</title>
        <authorList>
            <person name="Lass A."/>
            <person name="Zimmermann R."/>
            <person name="Haemmerle G."/>
            <person name="Riederer M."/>
            <person name="Schoiswohl G."/>
            <person name="Schweiger M."/>
            <person name="Kienesberger P."/>
            <person name="Strauss J.G."/>
            <person name="Gorkiewicz G."/>
            <person name="Zechner R."/>
        </authorList>
    </citation>
    <scope>FUNCTION</scope>
    <scope>CHARACTERIZATION OF VARIANTS CDS PRO-130 AND LYS-260</scope>
</reference>
<reference key="8">
    <citation type="journal article" date="2008" name="Am. J. Pathol.">
        <title>CGI-58 is an alpha/beta-hydrolase within lipid transporting lamellar granules of differentiated keratinocytes.</title>
        <authorList>
            <person name="Akiyama M."/>
            <person name="Sakai K."/>
            <person name="Takayama C."/>
            <person name="Yanagi T."/>
            <person name="Yamanaka Y."/>
            <person name="McMillan J.R."/>
            <person name="Shimizu H."/>
        </authorList>
    </citation>
    <scope>FUNCTION</scope>
    <scope>SUBCELLULAR LOCATION</scope>
    <scope>TISSUE SPECIFICITY</scope>
    <scope>DEVELOPMENTAL STAGE</scope>
    <scope>INDUCTION</scope>
</reference>
<reference key="9">
    <citation type="journal article" date="2008" name="J. Biol. Chem.">
        <title>CGI-58, the causative gene for Chanarin-Dorfman syndrome, mediates acylation of lysophosphatidic acid.</title>
        <authorList>
            <person name="Ghosh A.K."/>
            <person name="Ramakrishnan G."/>
            <person name="Chandramohan C."/>
            <person name="Rajasekharan R."/>
        </authorList>
    </citation>
    <scope>FUNCTION</scope>
    <scope>CATALYTIC ACTIVITY</scope>
    <scope>CHARACTERIZATION OF VARIANTS CDS PRO-130 AND LYS-260</scope>
</reference>
<reference key="10">
    <citation type="journal article" date="2012" name="Proc. Natl. Acad. Sci. U.S.A.">
        <title>N-terminal acetylome analyses and functional insights of the N-terminal acetyltransferase NatB.</title>
        <authorList>
            <person name="Van Damme P."/>
            <person name="Lasa M."/>
            <person name="Polevoda B."/>
            <person name="Gazquez C."/>
            <person name="Elosegui-Artola A."/>
            <person name="Kim D.S."/>
            <person name="De Juan-Pardo E."/>
            <person name="Demeyer K."/>
            <person name="Hole K."/>
            <person name="Larrea E."/>
            <person name="Timmerman E."/>
            <person name="Prieto J."/>
            <person name="Arnesen T."/>
            <person name="Sherman F."/>
            <person name="Gevaert K."/>
            <person name="Aldabe R."/>
        </authorList>
    </citation>
    <scope>ACETYLATION [LARGE SCALE ANALYSIS] AT ALA-2</scope>
    <scope>CLEAVAGE OF INITIATOR METHIONINE [LARGE SCALE ANALYSIS]</scope>
    <scope>IDENTIFICATION BY MASS SPECTROMETRY [LARGE SCALE ANALYSIS]</scope>
</reference>
<reference key="11">
    <citation type="journal article" date="2005" name="Arch. Dermatol.">
        <title>Two new mutations of the ABHD5 gene in a new adult case of Chanarin Dorfman syndrome: an uncommon lipid storage disease.</title>
        <authorList>
            <person name="Schleinitz N."/>
            <person name="Fischer J."/>
            <person name="Sanchez A."/>
            <person name="Veit V."/>
            <person name="Harle J.-R."/>
            <person name="Pelissier J.-F."/>
        </authorList>
    </citation>
    <scope>VARIANT ARG-82</scope>
</reference>
<reference key="12">
    <citation type="journal article" date="2007" name="J. Invest. Dermatol.">
        <title>A novel S115G mutation of CGI-58 in a Turkish patient with Dorfman-Chanarin syndrome.</title>
        <authorList>
            <person name="Ben Selma Z."/>
            <person name="Yilmaz S."/>
            <person name="Schischmanoff P.O."/>
            <person name="Blom A."/>
            <person name="Ozogul C."/>
            <person name="Laroche L."/>
            <person name="Caux F."/>
        </authorList>
    </citation>
    <scope>VARIANT CDS GLY-115</scope>
</reference>
<sequence length="349" mass="39096">MAAEEEEVDSADTGERSGWLTGWLPTWCPTSISHLKEAEEKMLKCVPCTYKKEPVRISNGNKIWTLKFSHNISNKTPLVLLHGFGGGLGLWALNFGDLCTNRPVYAFDLLGFGRSSRPRFDSDAEEVENQFVESIEEWRCALGLDKMILLGHNLGGFLAAAYSLKYPSRVNHLILVEPWGFPERPDLADQDRPIPVWIRALGAALTPFNPLAGLRIAGPFGLSLVQRLRPDFKRKYSSMFEDDTVTEYIYHCNVQTPSGETAFKNMTIPYGWAKRPMLQRIGKMHPDIPVSVIFGARSCIDGNSGTSIQSLRPHSYVKTIAILGAGHYVYADQPEEFNQKVKEICDTVD</sequence>
<name>ABHD5_HUMAN</name>
<comment type="function">
    <text evidence="3 7 9 10">Coenzyme A-dependent lysophosphatidic acid acyltransferase that catalyzes the transfer of an acyl group on a lysophosphatidic acid (PubMed:18606822). Functions preferentially with 1-oleoyl-lysophosphatidic acid followed by 1-palmitoyl-lysophosphatidic acid, 1-stearoyl-lysophosphatidic acid and 1-arachidonoyl-lysophosphatidic acid as lipid acceptor. Functions preferentially with arachidonoyl-CoA followed by oleoyl-CoA as acyl group donors (By similarity). Functions in phosphatidic acid biosynthesis (PubMed:18606822). May regulate the cellular storage of triacylglycerol through activation of the phospholipase PNPLA2 (PubMed:16679289). Involved in keratinocyte differentiation (PubMed:18832586). Regulates lipid droplet fusion (By similarity).</text>
</comment>
<comment type="catalytic activity">
    <reaction evidence="9">
        <text>a 1-acyl-sn-glycero-3-phosphate + an acyl-CoA = a 1,2-diacyl-sn-glycero-3-phosphate + CoA</text>
        <dbReference type="Rhea" id="RHEA:19709"/>
        <dbReference type="ChEBI" id="CHEBI:57287"/>
        <dbReference type="ChEBI" id="CHEBI:57970"/>
        <dbReference type="ChEBI" id="CHEBI:58342"/>
        <dbReference type="ChEBI" id="CHEBI:58608"/>
        <dbReference type="EC" id="2.3.1.51"/>
    </reaction>
    <physiologicalReaction direction="left-to-right" evidence="12">
        <dbReference type="Rhea" id="RHEA:19710"/>
    </physiologicalReaction>
</comment>
<comment type="catalytic activity">
    <reaction evidence="9">
        <text>1-(9Z-octadecenoyl)-sn-glycero-3-phosphate + hexadecanoyl-CoA = 1-(9Z)-octadecenoyl-2-hexadecanoyl-sn-glycero-3-phosphate + CoA</text>
        <dbReference type="Rhea" id="RHEA:37143"/>
        <dbReference type="ChEBI" id="CHEBI:57287"/>
        <dbReference type="ChEBI" id="CHEBI:57379"/>
        <dbReference type="ChEBI" id="CHEBI:74544"/>
        <dbReference type="ChEBI" id="CHEBI:74551"/>
    </reaction>
    <physiologicalReaction direction="left-to-right" evidence="12">
        <dbReference type="Rhea" id="RHEA:37144"/>
    </physiologicalReaction>
</comment>
<comment type="catalytic activity">
    <reaction evidence="9">
        <text>1-(9Z-octadecenoyl)-sn-glycero-3-phosphate + octadecanoyl-CoA = 1-(9Z-octadecenoyl)-2-octadecanoyl-sn-glycero-3-phosphate + CoA</text>
        <dbReference type="Rhea" id="RHEA:37147"/>
        <dbReference type="ChEBI" id="CHEBI:57287"/>
        <dbReference type="ChEBI" id="CHEBI:57394"/>
        <dbReference type="ChEBI" id="CHEBI:74544"/>
        <dbReference type="ChEBI" id="CHEBI:74552"/>
    </reaction>
    <physiologicalReaction direction="left-to-right" evidence="12">
        <dbReference type="Rhea" id="RHEA:37148"/>
    </physiologicalReaction>
</comment>
<comment type="catalytic activity">
    <reaction evidence="9">
        <text>1-(9Z-octadecenoyl)-sn-glycero-3-phosphate + (9Z)-octadecenoyl-CoA = 1,2-di-(9Z-octadecenoyl)-sn-glycero-3-phosphate + CoA</text>
        <dbReference type="Rhea" id="RHEA:37131"/>
        <dbReference type="ChEBI" id="CHEBI:57287"/>
        <dbReference type="ChEBI" id="CHEBI:57387"/>
        <dbReference type="ChEBI" id="CHEBI:74544"/>
        <dbReference type="ChEBI" id="CHEBI:74546"/>
    </reaction>
    <physiologicalReaction direction="left-to-right" evidence="12">
        <dbReference type="Rhea" id="RHEA:37132"/>
    </physiologicalReaction>
</comment>
<comment type="catalytic activity">
    <reaction evidence="3">
        <text>1-(9Z-octadecenoyl)-sn-glycero-3-phosphate + (5Z,8Z,11Z,14Z)-eicosatetraenoyl-CoA = 1-(9Z)-octadecenoyl-2-(5Z,8Z,11Z,14Z)-eicosatetraenoyl-sn-glycero-3-phosphate + CoA</text>
        <dbReference type="Rhea" id="RHEA:37443"/>
        <dbReference type="ChEBI" id="CHEBI:57287"/>
        <dbReference type="ChEBI" id="CHEBI:57368"/>
        <dbReference type="ChEBI" id="CHEBI:74544"/>
        <dbReference type="ChEBI" id="CHEBI:74928"/>
    </reaction>
    <physiologicalReaction direction="left-to-right" evidence="3">
        <dbReference type="Rhea" id="RHEA:37444"/>
    </physiologicalReaction>
</comment>
<comment type="catalytic activity">
    <reaction evidence="3">
        <text>eicosanoyl-CoA + 1-(9Z-octadecenoyl)-sn-glycero-3-phosphate = 1-(9Z)-octadecenoyl-2-eicosanoyl-sn-glycero-3-phosphate + CoA</text>
        <dbReference type="Rhea" id="RHEA:37451"/>
        <dbReference type="ChEBI" id="CHEBI:57287"/>
        <dbReference type="ChEBI" id="CHEBI:57380"/>
        <dbReference type="ChEBI" id="CHEBI:74544"/>
        <dbReference type="ChEBI" id="CHEBI:74937"/>
    </reaction>
    <physiologicalReaction direction="left-to-right" evidence="3">
        <dbReference type="Rhea" id="RHEA:37452"/>
    </physiologicalReaction>
</comment>
<comment type="catalytic activity">
    <reaction evidence="3">
        <text>1-hexadecanoyl-sn-glycero-3-phosphate + (9Z)-octadecenoyl-CoA = 1-hexadecanoyl-2-(9Z-octadecenoyl)-sn-glycero-3-phosphate + CoA</text>
        <dbReference type="Rhea" id="RHEA:33187"/>
        <dbReference type="ChEBI" id="CHEBI:57287"/>
        <dbReference type="ChEBI" id="CHEBI:57387"/>
        <dbReference type="ChEBI" id="CHEBI:57518"/>
        <dbReference type="ChEBI" id="CHEBI:64839"/>
    </reaction>
    <physiologicalReaction direction="left-to-right" evidence="3">
        <dbReference type="Rhea" id="RHEA:33188"/>
    </physiologicalReaction>
</comment>
<comment type="catalytic activity">
    <reaction evidence="3">
        <text>1-octadecanoyl-sn-glycero-3-phosphate + (9Z)-octadecenoyl-CoA = 1-octadecanoyl-2-(9Z-octadecenoyl)-sn-glycero-3-phosphate + CoA</text>
        <dbReference type="Rhea" id="RHEA:37163"/>
        <dbReference type="ChEBI" id="CHEBI:57287"/>
        <dbReference type="ChEBI" id="CHEBI:57387"/>
        <dbReference type="ChEBI" id="CHEBI:74560"/>
        <dbReference type="ChEBI" id="CHEBI:74565"/>
    </reaction>
    <physiologicalReaction direction="left-to-right" evidence="3">
        <dbReference type="Rhea" id="RHEA:37164"/>
    </physiologicalReaction>
</comment>
<comment type="catalytic activity">
    <reaction evidence="3">
        <text>1-(5Z,8Z,11Z,14Z-eicosatetraenoyl)-sn-glycero-3-phosphate + (9Z)-octadecenoyl-CoA = 1-(5Z,8Z,11Z,14Z)-eicosatetraenoyl-2-(9Z)-octadecenoyl-sn-glycero-3-phosphate + CoA</text>
        <dbReference type="Rhea" id="RHEA:37455"/>
        <dbReference type="ChEBI" id="CHEBI:57287"/>
        <dbReference type="ChEBI" id="CHEBI:57387"/>
        <dbReference type="ChEBI" id="CHEBI:74938"/>
        <dbReference type="ChEBI" id="CHEBI:74941"/>
    </reaction>
    <physiologicalReaction direction="left-to-right" evidence="3">
        <dbReference type="Rhea" id="RHEA:37456"/>
    </physiologicalReaction>
</comment>
<comment type="activity regulation">
    <text evidence="3">Acyltransferase activity is inhibited by detergents such as Triton X-100 and 3-[(3-cholamidopropyl)dimethylammonio]-1-propanesulfonate (CHAPS). Acyltransferase activity is inhibited by the presence of magnesium and calcium.</text>
</comment>
<comment type="subunit">
    <text evidence="1">Interacts with ADRP, PLIN and PNPLA2. Interacts with PLIN5; promotes interaction with PNPLA2 (By similarity).</text>
</comment>
<comment type="interaction">
    <interactant intactId="EBI-2813554">
        <id>Q8WTS1</id>
    </interactant>
    <interactant intactId="EBI-12261896">
        <id>Q5T4B2</id>
        <label>CERCAM</label>
    </interactant>
    <organismsDiffer>false</organismsDiffer>
    <experiments>3</experiments>
</comment>
<comment type="interaction">
    <interactant intactId="EBI-2813554">
        <id>Q8WTS1</id>
    </interactant>
    <interactant intactId="EBI-22754239">
        <id>P51793</id>
        <label>CLCN4</label>
    </interactant>
    <organismsDiffer>false</organismsDiffer>
    <experiments>3</experiments>
</comment>
<comment type="interaction">
    <interactant intactId="EBI-2813554">
        <id>Q8WTS1</id>
    </interactant>
    <interactant intactId="EBI-745535">
        <id>Q8NI60</id>
        <label>COQ8A</label>
    </interactant>
    <organismsDiffer>false</organismsDiffer>
    <experiments>3</experiments>
</comment>
<comment type="interaction">
    <interactant intactId="EBI-2813554">
        <id>Q8WTS1</id>
    </interactant>
    <interactant intactId="EBI-12831978">
        <id>Q6ZPD8</id>
        <label>DGAT2L6</label>
    </interactant>
    <organismsDiffer>false</organismsDiffer>
    <experiments>3</experiments>
</comment>
<comment type="interaction">
    <interactant intactId="EBI-2813554">
        <id>Q8WTS1</id>
    </interactant>
    <interactant intactId="EBI-9304251">
        <id>Q05329</id>
        <label>GAD2</label>
    </interactant>
    <organismsDiffer>false</organismsDiffer>
    <experiments>3</experiments>
</comment>
<comment type="interaction">
    <interactant intactId="EBI-2813554">
        <id>Q8WTS1</id>
    </interactant>
    <interactant intactId="EBI-18908258">
        <id>O00258</id>
        <label>GET1</label>
    </interactant>
    <organismsDiffer>false</organismsDiffer>
    <experiments>3</experiments>
</comment>
<comment type="interaction">
    <interactant intactId="EBI-2813554">
        <id>Q8WTS1</id>
    </interactant>
    <interactant intactId="EBI-17517256">
        <id>P48058-2</id>
        <label>GRIA4</label>
    </interactant>
    <organismsDiffer>false</organismsDiffer>
    <experiments>3</experiments>
</comment>
<comment type="interaction">
    <interactant intactId="EBI-2813554">
        <id>Q8WTS1</id>
    </interactant>
    <interactant intactId="EBI-740987">
        <id>Q9NQG6</id>
        <label>MIEF1</label>
    </interactant>
    <organismsDiffer>false</organismsDiffer>
    <experiments>5</experiments>
</comment>
<comment type="interaction">
    <interactant intactId="EBI-2813554">
        <id>Q8WTS1</id>
    </interactant>
    <interactant intactId="EBI-17616589">
        <id>A6NKB5-5</id>
        <label>PCNX2</label>
    </interactant>
    <organismsDiffer>false</organismsDiffer>
    <experiments>3</experiments>
</comment>
<comment type="interaction">
    <interactant intactId="EBI-2813554">
        <id>Q8WTS1</id>
    </interactant>
    <interactant intactId="EBI-2115275">
        <id>Q99541</id>
        <label>PLIN2</label>
    </interactant>
    <organismsDiffer>false</organismsDiffer>
    <experiments>3</experiments>
</comment>
<comment type="interaction">
    <interactant intactId="EBI-2813554">
        <id>Q8WTS1</id>
    </interactant>
    <interactant intactId="EBI-725795">
        <id>O60664</id>
        <label>PLIN3</label>
    </interactant>
    <organismsDiffer>false</organismsDiffer>
    <experiments>3</experiments>
</comment>
<comment type="interaction">
    <interactant intactId="EBI-2813554">
        <id>Q8WTS1</id>
    </interactant>
    <interactant intactId="EBI-21732470">
        <id>Q00G26</id>
        <label>PLIN5</label>
    </interactant>
    <organismsDiffer>false</organismsDiffer>
    <experiments>3</experiments>
</comment>
<comment type="interaction">
    <interactant intactId="EBI-2813554">
        <id>Q8WTS1</id>
    </interactant>
    <interactant intactId="EBI-3232108">
        <id>Q8N0V3</id>
        <label>RBFA</label>
    </interactant>
    <organismsDiffer>false</organismsDiffer>
    <experiments>3</experiments>
</comment>
<comment type="interaction">
    <interactant intactId="EBI-2813554">
        <id>Q8WTS1</id>
    </interactant>
    <interactant intactId="EBI-13044680">
        <id>Q9Y225-2</id>
        <label>RNF24</label>
    </interactant>
    <organismsDiffer>false</organismsDiffer>
    <experiments>3</experiments>
</comment>
<comment type="interaction">
    <interactant intactId="EBI-2813554">
        <id>Q8WTS1</id>
    </interactant>
    <interactant intactId="EBI-6257312">
        <id>Q9BVN2</id>
        <label>RUSC1</label>
    </interactant>
    <organismsDiffer>false</organismsDiffer>
    <experiments>3</experiments>
</comment>
<comment type="interaction">
    <interactant intactId="EBI-2813554">
        <id>Q8WTS1</id>
    </interactant>
    <interactant intactId="EBI-2623095">
        <id>Q9Y371</id>
        <label>SH3GLB1</label>
    </interactant>
    <organismsDiffer>false</organismsDiffer>
    <experiments>3</experiments>
</comment>
<comment type="interaction">
    <interactant intactId="EBI-2813554">
        <id>Q8WTS1</id>
    </interactant>
    <interactant intactId="EBI-12056955">
        <id>Q8N4M1-3</id>
        <label>SLC44A3</label>
    </interactant>
    <organismsDiffer>false</organismsDiffer>
    <experiments>3</experiments>
</comment>
<comment type="interaction">
    <interactant intactId="EBI-2813554">
        <id>Q8WTS1</id>
    </interactant>
    <interactant intactId="EBI-8638294">
        <id>Q9NUH8</id>
        <label>TMEM14B</label>
    </interactant>
    <organismsDiffer>false</organismsDiffer>
    <experiments>3</experiments>
</comment>
<comment type="interaction">
    <interactant intactId="EBI-2813554">
        <id>Q8WTS1</id>
    </interactant>
    <interactant intactId="EBI-782604">
        <id>O43399</id>
        <label>TPD52L2</label>
    </interactant>
    <organismsDiffer>false</organismsDiffer>
    <experiments>3</experiments>
</comment>
<comment type="interaction">
    <interactant intactId="EBI-2813554">
        <id>Q8WTS1</id>
    </interactant>
    <interactant intactId="EBI-748373">
        <id>Q6PEW1</id>
        <label>ZCCHC12</label>
    </interactant>
    <organismsDiffer>false</organismsDiffer>
    <experiments>3</experiments>
</comment>
<comment type="subcellular location">
    <subcellularLocation>
        <location evidence="10">Cytoplasm</location>
    </subcellularLocation>
    <subcellularLocation>
        <location evidence="3">Lipid droplet</location>
    </subcellularLocation>
    <subcellularLocation>
        <location evidence="3">Cytoplasm</location>
        <location evidence="3">Cytosol</location>
    </subcellularLocation>
    <text evidence="1">Colocalized with PLIN and ADRP on the surface of lipid droplets. The localization is dependent upon the metabolic status of the adipocytes and the activity of PKA (By similarity).</text>
</comment>
<comment type="tissue specificity">
    <text evidence="5 10">Widely expressed in various tissues, including lymphocytes, liver, skeletal muscle and brain. Expressed by upper epidermal layers and dermal fibroblasts in skin, hepatocytes and neurons (at protein level).</text>
</comment>
<comment type="developmental stage">
    <text evidence="10">Detected in fetal epidermis from 49 to 135 days estimated gestational age (at protein level).</text>
</comment>
<comment type="induction">
    <text evidence="10">Up-regulated upon keratinocyte differentiation (at protein level).</text>
</comment>
<comment type="domain">
    <text evidence="1">The HXXXXD motif is essential for acyltransferase activity and may constitute the binding site for the phosphate moiety of the glycerol-3-phosphate.</text>
</comment>
<comment type="disease" evidence="5 7 8 9">
    <disease id="DI-00262">
        <name>Chanarin-Dorfman syndrome</name>
        <acronym>CDS</acronym>
        <description>An autosomal recessive inborn error of lipid metabolism with multisystemic accumulation of triglycerides although plasma concentrations are normal. Clinical characteristics are congenital generalized ichthyosis, vacuolated leukocytes, hepatomegaly, myopathy, cataracts, neurosensory hearing loss and developmental delay. The disorder presents at birth with generalized, fine, white scaling of the skin and a variable degree of erythema resembling non-bullous congenital ichthyosiform erythroderma.</description>
        <dbReference type="MIM" id="275630"/>
    </disease>
    <text>The disease is caused by variants affecting the gene represented in this entry.</text>
</comment>
<comment type="similarity">
    <text evidence="11">Belongs to the peptidase S33 family. ABHD4/ABHD5 subfamily.</text>
</comment>
<evidence type="ECO:0000250" key="1"/>
<evidence type="ECO:0000250" key="2">
    <source>
        <dbReference type="UniProtKB" id="Q6QA69"/>
    </source>
</evidence>
<evidence type="ECO:0000250" key="3">
    <source>
        <dbReference type="UniProtKB" id="Q9DBL9"/>
    </source>
</evidence>
<evidence type="ECO:0000255" key="4"/>
<evidence type="ECO:0000269" key="5">
    <source>
    </source>
</evidence>
<evidence type="ECO:0000269" key="6">
    <source>
    </source>
</evidence>
<evidence type="ECO:0000269" key="7">
    <source>
    </source>
</evidence>
<evidence type="ECO:0000269" key="8">
    <source>
    </source>
</evidence>
<evidence type="ECO:0000269" key="9">
    <source>
    </source>
</evidence>
<evidence type="ECO:0000269" key="10">
    <source>
    </source>
</evidence>
<evidence type="ECO:0000305" key="11"/>
<evidence type="ECO:0000305" key="12">
    <source>
    </source>
</evidence>
<evidence type="ECO:0000312" key="13">
    <source>
        <dbReference type="HGNC" id="HGNC:21396"/>
    </source>
</evidence>
<evidence type="ECO:0007744" key="14">
    <source>
    </source>
</evidence>
<organism>
    <name type="scientific">Homo sapiens</name>
    <name type="common">Human</name>
    <dbReference type="NCBI Taxonomy" id="9606"/>
    <lineage>
        <taxon>Eukaryota</taxon>
        <taxon>Metazoa</taxon>
        <taxon>Chordata</taxon>
        <taxon>Craniata</taxon>
        <taxon>Vertebrata</taxon>
        <taxon>Euteleostomi</taxon>
        <taxon>Mammalia</taxon>
        <taxon>Eutheria</taxon>
        <taxon>Euarchontoglires</taxon>
        <taxon>Primates</taxon>
        <taxon>Haplorrhini</taxon>
        <taxon>Catarrhini</taxon>
        <taxon>Hominidae</taxon>
        <taxon>Homo</taxon>
    </lineage>
</organism>
<accession>Q8WTS1</accession>
<accession>B2R9K0</accession>
<accession>Q9Y369</accession>
<proteinExistence type="evidence at protein level"/>